<evidence type="ECO:0000250" key="1"/>
<evidence type="ECO:0000305" key="2"/>
<name>RDR1_ORYSJ</name>
<dbReference type="EC" id="2.7.7.48"/>
<dbReference type="EMBL" id="AP008208">
    <property type="protein sequence ID" value="BAF09965.1"/>
    <property type="status" value="ALT_SEQ"/>
    <property type="molecule type" value="Genomic_DNA"/>
</dbReference>
<dbReference type="EMBL" id="AP014958">
    <property type="protein sequence ID" value="BAS80805.1"/>
    <property type="molecule type" value="Genomic_DNA"/>
</dbReference>
<dbReference type="EMBL" id="AK101440">
    <property type="status" value="NOT_ANNOTATED_CDS"/>
    <property type="molecule type" value="mRNA"/>
</dbReference>
<dbReference type="SMR" id="Q0DXS3"/>
<dbReference type="FunCoup" id="Q0DXS3">
    <property type="interactions" value="97"/>
</dbReference>
<dbReference type="STRING" id="39947.Q0DXS3"/>
<dbReference type="PaxDb" id="39947-Q0DXS3"/>
<dbReference type="EnsemblPlants" id="Os02t0736200-01">
    <property type="protein sequence ID" value="Os02t0736200-01"/>
    <property type="gene ID" value="Os02g0736200"/>
</dbReference>
<dbReference type="Gramene" id="Os02t0736200-01">
    <property type="protein sequence ID" value="Os02t0736200-01"/>
    <property type="gene ID" value="Os02g0736200"/>
</dbReference>
<dbReference type="KEGG" id="dosa:Os02g0736200"/>
<dbReference type="InParanoid" id="Q0DXS3"/>
<dbReference type="Proteomes" id="UP000000763">
    <property type="component" value="Chromosome 2"/>
</dbReference>
<dbReference type="Proteomes" id="UP000059680">
    <property type="component" value="Chromosome 2"/>
</dbReference>
<dbReference type="GO" id="GO:0031380">
    <property type="term" value="C:nuclear RNA-directed RNA polymerase complex"/>
    <property type="evidence" value="ECO:0000318"/>
    <property type="project" value="GO_Central"/>
</dbReference>
<dbReference type="GO" id="GO:0003723">
    <property type="term" value="F:RNA binding"/>
    <property type="evidence" value="ECO:0007669"/>
    <property type="project" value="UniProtKB-KW"/>
</dbReference>
<dbReference type="GO" id="GO:0003968">
    <property type="term" value="F:RNA-directed RNA polymerase activity"/>
    <property type="evidence" value="ECO:0000318"/>
    <property type="project" value="GO_Central"/>
</dbReference>
<dbReference type="GO" id="GO:0060148">
    <property type="term" value="P:positive regulation of post-transcriptional gene silencing"/>
    <property type="evidence" value="ECO:0007669"/>
    <property type="project" value="EnsemblPlants"/>
</dbReference>
<dbReference type="GO" id="GO:0009751">
    <property type="term" value="P:response to salicylic acid"/>
    <property type="evidence" value="ECO:0007669"/>
    <property type="project" value="EnsemblPlants"/>
</dbReference>
<dbReference type="GO" id="GO:0009615">
    <property type="term" value="P:response to virus"/>
    <property type="evidence" value="ECO:0007669"/>
    <property type="project" value="EnsemblPlants"/>
</dbReference>
<dbReference type="GO" id="GO:0030422">
    <property type="term" value="P:siRNA processing"/>
    <property type="evidence" value="ECO:0000318"/>
    <property type="project" value="GO_Central"/>
</dbReference>
<dbReference type="GO" id="GO:0010025">
    <property type="term" value="P:wax biosynthetic process"/>
    <property type="evidence" value="ECO:0007669"/>
    <property type="project" value="EnsemblPlants"/>
</dbReference>
<dbReference type="InterPro" id="IPR007855">
    <property type="entry name" value="RNA-dep_RNA_pol_euk-typ"/>
</dbReference>
<dbReference type="PANTHER" id="PTHR23079">
    <property type="entry name" value="RNA-DEPENDENT RNA POLYMERASE"/>
    <property type="match status" value="1"/>
</dbReference>
<dbReference type="PANTHER" id="PTHR23079:SF1">
    <property type="entry name" value="RNA-DEPENDENT RNA POLYMERASE 1"/>
    <property type="match status" value="1"/>
</dbReference>
<dbReference type="Pfam" id="PF05183">
    <property type="entry name" value="RdRP"/>
    <property type="match status" value="1"/>
</dbReference>
<comment type="function">
    <text evidence="1">Probably involved in the RNA silencing pathway and required for the generation of small interfering RNAs (siRNAs).</text>
</comment>
<comment type="catalytic activity">
    <reaction>
        <text>RNA(n) + a ribonucleoside 5'-triphosphate = RNA(n+1) + diphosphate</text>
        <dbReference type="Rhea" id="RHEA:21248"/>
        <dbReference type="Rhea" id="RHEA-COMP:14527"/>
        <dbReference type="Rhea" id="RHEA-COMP:17342"/>
        <dbReference type="ChEBI" id="CHEBI:33019"/>
        <dbReference type="ChEBI" id="CHEBI:61557"/>
        <dbReference type="ChEBI" id="CHEBI:140395"/>
        <dbReference type="EC" id="2.7.7.48"/>
    </reaction>
</comment>
<comment type="similarity">
    <text evidence="2">Belongs to the RdRP family.</text>
</comment>
<comment type="sequence caution" evidence="2">
    <conflict type="erroneous gene model prediction">
        <sequence resource="EMBL-CDS" id="BAF09965"/>
    </conflict>
</comment>
<protein>
    <recommendedName>
        <fullName>Probable RNA-dependent RNA polymerase 1</fullName>
        <shortName>OsRDR1</shortName>
        <ecNumber>2.7.7.48</ecNumber>
    </recommendedName>
</protein>
<gene>
    <name type="primary">RDR1</name>
    <name type="ordered locus">Os02g0736200</name>
    <name type="ordered locus">LOC_Os02g50330</name>
</gene>
<reference key="1">
    <citation type="journal article" date="2005" name="Nature">
        <title>The map-based sequence of the rice genome.</title>
        <authorList>
            <consortium name="International rice genome sequencing project (IRGSP)"/>
        </authorList>
    </citation>
    <scope>NUCLEOTIDE SEQUENCE [LARGE SCALE GENOMIC DNA]</scope>
    <source>
        <strain>cv. Nipponbare</strain>
    </source>
</reference>
<reference key="2">
    <citation type="journal article" date="2008" name="Nucleic Acids Res.">
        <title>The rice annotation project database (RAP-DB): 2008 update.</title>
        <authorList>
            <consortium name="The rice annotation project (RAP)"/>
        </authorList>
    </citation>
    <scope>GENOME REANNOTATION</scope>
    <source>
        <strain>cv. Nipponbare</strain>
    </source>
</reference>
<reference key="3">
    <citation type="journal article" date="2013" name="Rice">
        <title>Improvement of the Oryza sativa Nipponbare reference genome using next generation sequence and optical map data.</title>
        <authorList>
            <person name="Kawahara Y."/>
            <person name="de la Bastide M."/>
            <person name="Hamilton J.P."/>
            <person name="Kanamori H."/>
            <person name="McCombie W.R."/>
            <person name="Ouyang S."/>
            <person name="Schwartz D.C."/>
            <person name="Tanaka T."/>
            <person name="Wu J."/>
            <person name="Zhou S."/>
            <person name="Childs K.L."/>
            <person name="Davidson R.M."/>
            <person name="Lin H."/>
            <person name="Quesada-Ocampo L."/>
            <person name="Vaillancourt B."/>
            <person name="Sakai H."/>
            <person name="Lee S.S."/>
            <person name="Kim J."/>
            <person name="Numa H."/>
            <person name="Itoh T."/>
            <person name="Buell C.R."/>
            <person name="Matsumoto T."/>
        </authorList>
    </citation>
    <scope>GENOME REANNOTATION</scope>
    <source>
        <strain>cv. Nipponbare</strain>
    </source>
</reference>
<reference key="4">
    <citation type="journal article" date="2003" name="Science">
        <title>Collection, mapping, and annotation of over 28,000 cDNA clones from japonica rice.</title>
        <authorList>
            <consortium name="The rice full-length cDNA consortium"/>
        </authorList>
    </citation>
    <scope>NUCLEOTIDE SEQUENCE [LARGE SCALE MRNA] OF 1-449</scope>
    <source>
        <strain>cv. Nipponbare</strain>
    </source>
</reference>
<reference key="5">
    <citation type="journal article" date="2008" name="BMC Genomics">
        <title>Genome-wide identification, organization and phylogenetic analysis of dicer-like, argonaute and RNA-dependent RNA polymerase gene families and their expression analysis during reproductive development and stress in rice.</title>
        <authorList>
            <person name="Kapoor M."/>
            <person name="Arora R."/>
            <person name="Lama T."/>
            <person name="Nijhawan A."/>
            <person name="Khurana J.P."/>
            <person name="Tyagi A.K."/>
            <person name="Kapoor S."/>
        </authorList>
    </citation>
    <scope>GENE FAMILY</scope>
    <scope>NOMENCLATURE</scope>
</reference>
<sequence length="740" mass="84255">MMDWFMSTVYFYGPEINVSNRVVRNFSSDIENFLRISFVDEDCEKLRATDLSPRSASGHDANRTALYKRVLSVLSDGITIGGKNFEFLAFSSSQLRDNSAWMFASRQGLAASDIRTWMGDFRNIRNVAKYAARLGQSFSSSTETLKVQKYEVEEISDIKNGTQHVFSDGIGKISSAFANEVAMKCNLKRFAPSAFQIRYGGYKGVVAVDPTSRWKLSLRKSMLKFQSDNITVDVLAYSKYQPGFLNRQLITLLSTLGVRDSVFEQKQEEAVNQLNKMVTDPQAAIEAIELMPMGEITNAVKELLLCGYQPDDEPYLSMLLQTFRASKLLELKTKSRILIPKGRAMMGCLDETRTLKYGQVFIRATSGVNDNDRFTVTGKVVIAKNPCLHPGDIRILHAVDVPVLHHMFNCVVFPQQGPRPHPNECSGSDLDGDIYFVSWDPSLIPPRMVTPMDYTPAPTETLDHDVTIEEVEEYFTNYIVNESLGMIANAHVVFADKEDLKAESSPCIELAKLFSIAVDFPKTGVPALIPPELHVKEYPDFMEKLDKVTYESKGVIGKLYREIKKHTPHIKHFTREVARRSYDTDMIVDGYEDYITEAMALKDEYDFKLGNLMDHYGIKSEAEIISGCILKMAKNFTKKSDADAIRLAVRSLRKEARSRFSEMSLDDNGHGHDASEAKASAWYHVTYHPEFWGCYNEGYERPHFISFPWCIYEKLLRIKQRRKFVRKMQPELFSLHNLRI</sequence>
<accession>Q0DXS3</accession>
<accession>A0A0P0VPF0</accession>
<feature type="chain" id="PRO_0000378445" description="Probable RNA-dependent RNA polymerase 1">
    <location>
        <begin position="1"/>
        <end position="740"/>
    </location>
</feature>
<keyword id="KW-0548">Nucleotidyltransferase</keyword>
<keyword id="KW-1185">Reference proteome</keyword>
<keyword id="KW-0694">RNA-binding</keyword>
<keyword id="KW-0696">RNA-directed RNA polymerase</keyword>
<keyword id="KW-0943">RNA-mediated gene silencing</keyword>
<keyword id="KW-0808">Transferase</keyword>
<proteinExistence type="evidence at transcript level"/>
<organism>
    <name type="scientific">Oryza sativa subsp. japonica</name>
    <name type="common">Rice</name>
    <dbReference type="NCBI Taxonomy" id="39947"/>
    <lineage>
        <taxon>Eukaryota</taxon>
        <taxon>Viridiplantae</taxon>
        <taxon>Streptophyta</taxon>
        <taxon>Embryophyta</taxon>
        <taxon>Tracheophyta</taxon>
        <taxon>Spermatophyta</taxon>
        <taxon>Magnoliopsida</taxon>
        <taxon>Liliopsida</taxon>
        <taxon>Poales</taxon>
        <taxon>Poaceae</taxon>
        <taxon>BOP clade</taxon>
        <taxon>Oryzoideae</taxon>
        <taxon>Oryzeae</taxon>
        <taxon>Oryzinae</taxon>
        <taxon>Oryza</taxon>
        <taxon>Oryza sativa</taxon>
    </lineage>
</organism>